<protein>
    <recommendedName>
        <fullName>Fat body protein 2</fullName>
    </recommendedName>
    <alternativeName>
        <fullName>Fat body protein P6</fullName>
    </alternativeName>
</protein>
<accession>P54398</accession>
<accession>O61511</accession>
<accession>O61512</accession>
<accession>O61513</accession>
<accession>O61514</accession>
<accession>O62595</accession>
<accession>Q9VLC2</accession>
<organism>
    <name type="scientific">Drosophila melanogaster</name>
    <name type="common">Fruit fly</name>
    <dbReference type="NCBI Taxonomy" id="7227"/>
    <lineage>
        <taxon>Eukaryota</taxon>
        <taxon>Metazoa</taxon>
        <taxon>Ecdysozoa</taxon>
        <taxon>Arthropoda</taxon>
        <taxon>Hexapoda</taxon>
        <taxon>Insecta</taxon>
        <taxon>Pterygota</taxon>
        <taxon>Neoptera</taxon>
        <taxon>Endopterygota</taxon>
        <taxon>Diptera</taxon>
        <taxon>Brachycera</taxon>
        <taxon>Muscomorpha</taxon>
        <taxon>Ephydroidea</taxon>
        <taxon>Drosophilidae</taxon>
        <taxon>Drosophila</taxon>
        <taxon>Sophophora</taxon>
    </lineage>
</organism>
<gene>
    <name type="primary">Fbp2</name>
    <name type="ORF">CG3763</name>
</gene>
<name>FBP2_DROME</name>
<comment type="similarity">
    <text evidence="2">Belongs to the short-chain dehydrogenases/reductases (SDR) family.</text>
</comment>
<keyword id="KW-0560">Oxidoreductase</keyword>
<keyword id="KW-1185">Reference proteome</keyword>
<evidence type="ECO:0000250" key="1"/>
<evidence type="ECO:0000305" key="2"/>
<proteinExistence type="evidence at transcript level"/>
<reference key="1">
    <citation type="journal article" date="1991" name="J. Mol. Evol.">
        <title>Drosophila fat body protein P6 and alcohol dehydrogenase are derived from a common ancestral protein.</title>
        <authorList>
            <person name="Rat L."/>
            <person name="Veuille M."/>
            <person name="Lepesant J.-A."/>
        </authorList>
    </citation>
    <scope>NUCLEOTIDE SEQUENCE [GENOMIC DNA]</scope>
</reference>
<reference key="2">
    <citation type="journal article" date="1999" name="Mol. Biol. Evol.">
        <title>Partial sweeping of variation at the Fbp2 locus in a west African population of Drosophila melanogaster.</title>
        <authorList>
            <person name="Benassi V."/>
            <person name="Depaulis F."/>
            <person name="Meghlaoui G.K."/>
            <person name="Veuille M."/>
        </authorList>
    </citation>
    <scope>NUCLEOTIDE SEQUENCE [GENOMIC DNA]</scope>
    <source>
        <strain>L12</strain>
        <strain>L126</strain>
        <strain>L15</strain>
        <strain>L19</strain>
        <strain>L21</strain>
        <strain>L27</strain>
        <strain>L28</strain>
        <strain>L3</strain>
        <strain>L36</strain>
        <strain>L5</strain>
    </source>
</reference>
<reference key="3">
    <citation type="journal article" date="2000" name="Science">
        <title>The genome sequence of Drosophila melanogaster.</title>
        <authorList>
            <person name="Adams M.D."/>
            <person name="Celniker S.E."/>
            <person name="Holt R.A."/>
            <person name="Evans C.A."/>
            <person name="Gocayne J.D."/>
            <person name="Amanatides P.G."/>
            <person name="Scherer S.E."/>
            <person name="Li P.W."/>
            <person name="Hoskins R.A."/>
            <person name="Galle R.F."/>
            <person name="George R.A."/>
            <person name="Lewis S.E."/>
            <person name="Richards S."/>
            <person name="Ashburner M."/>
            <person name="Henderson S.N."/>
            <person name="Sutton G.G."/>
            <person name="Wortman J.R."/>
            <person name="Yandell M.D."/>
            <person name="Zhang Q."/>
            <person name="Chen L.X."/>
            <person name="Brandon R.C."/>
            <person name="Rogers Y.-H.C."/>
            <person name="Blazej R.G."/>
            <person name="Champe M."/>
            <person name="Pfeiffer B.D."/>
            <person name="Wan K.H."/>
            <person name="Doyle C."/>
            <person name="Baxter E.G."/>
            <person name="Helt G."/>
            <person name="Nelson C.R."/>
            <person name="Miklos G.L.G."/>
            <person name="Abril J.F."/>
            <person name="Agbayani A."/>
            <person name="An H.-J."/>
            <person name="Andrews-Pfannkoch C."/>
            <person name="Baldwin D."/>
            <person name="Ballew R.M."/>
            <person name="Basu A."/>
            <person name="Baxendale J."/>
            <person name="Bayraktaroglu L."/>
            <person name="Beasley E.M."/>
            <person name="Beeson K.Y."/>
            <person name="Benos P.V."/>
            <person name="Berman B.P."/>
            <person name="Bhandari D."/>
            <person name="Bolshakov S."/>
            <person name="Borkova D."/>
            <person name="Botchan M.R."/>
            <person name="Bouck J."/>
            <person name="Brokstein P."/>
            <person name="Brottier P."/>
            <person name="Burtis K.C."/>
            <person name="Busam D.A."/>
            <person name="Butler H."/>
            <person name="Cadieu E."/>
            <person name="Center A."/>
            <person name="Chandra I."/>
            <person name="Cherry J.M."/>
            <person name="Cawley S."/>
            <person name="Dahlke C."/>
            <person name="Davenport L.B."/>
            <person name="Davies P."/>
            <person name="de Pablos B."/>
            <person name="Delcher A."/>
            <person name="Deng Z."/>
            <person name="Mays A.D."/>
            <person name="Dew I."/>
            <person name="Dietz S.M."/>
            <person name="Dodson K."/>
            <person name="Doup L.E."/>
            <person name="Downes M."/>
            <person name="Dugan-Rocha S."/>
            <person name="Dunkov B.C."/>
            <person name="Dunn P."/>
            <person name="Durbin K.J."/>
            <person name="Evangelista C.C."/>
            <person name="Ferraz C."/>
            <person name="Ferriera S."/>
            <person name="Fleischmann W."/>
            <person name="Fosler C."/>
            <person name="Gabrielian A.E."/>
            <person name="Garg N.S."/>
            <person name="Gelbart W.M."/>
            <person name="Glasser K."/>
            <person name="Glodek A."/>
            <person name="Gong F."/>
            <person name="Gorrell J.H."/>
            <person name="Gu Z."/>
            <person name="Guan P."/>
            <person name="Harris M."/>
            <person name="Harris N.L."/>
            <person name="Harvey D.A."/>
            <person name="Heiman T.J."/>
            <person name="Hernandez J.R."/>
            <person name="Houck J."/>
            <person name="Hostin D."/>
            <person name="Houston K.A."/>
            <person name="Howland T.J."/>
            <person name="Wei M.-H."/>
            <person name="Ibegwam C."/>
            <person name="Jalali M."/>
            <person name="Kalush F."/>
            <person name="Karpen G.H."/>
            <person name="Ke Z."/>
            <person name="Kennison J.A."/>
            <person name="Ketchum K.A."/>
            <person name="Kimmel B.E."/>
            <person name="Kodira C.D."/>
            <person name="Kraft C.L."/>
            <person name="Kravitz S."/>
            <person name="Kulp D."/>
            <person name="Lai Z."/>
            <person name="Lasko P."/>
            <person name="Lei Y."/>
            <person name="Levitsky A.A."/>
            <person name="Li J.H."/>
            <person name="Li Z."/>
            <person name="Liang Y."/>
            <person name="Lin X."/>
            <person name="Liu X."/>
            <person name="Mattei B."/>
            <person name="McIntosh T.C."/>
            <person name="McLeod M.P."/>
            <person name="McPherson D."/>
            <person name="Merkulov G."/>
            <person name="Milshina N.V."/>
            <person name="Mobarry C."/>
            <person name="Morris J."/>
            <person name="Moshrefi A."/>
            <person name="Mount S.M."/>
            <person name="Moy M."/>
            <person name="Murphy B."/>
            <person name="Murphy L."/>
            <person name="Muzny D.M."/>
            <person name="Nelson D.L."/>
            <person name="Nelson D.R."/>
            <person name="Nelson K.A."/>
            <person name="Nixon K."/>
            <person name="Nusskern D.R."/>
            <person name="Pacleb J.M."/>
            <person name="Palazzolo M."/>
            <person name="Pittman G.S."/>
            <person name="Pan S."/>
            <person name="Pollard J."/>
            <person name="Puri V."/>
            <person name="Reese M.G."/>
            <person name="Reinert K."/>
            <person name="Remington K."/>
            <person name="Saunders R.D.C."/>
            <person name="Scheeler F."/>
            <person name="Shen H."/>
            <person name="Shue B.C."/>
            <person name="Siden-Kiamos I."/>
            <person name="Simpson M."/>
            <person name="Skupski M.P."/>
            <person name="Smith T.J."/>
            <person name="Spier E."/>
            <person name="Spradling A.C."/>
            <person name="Stapleton M."/>
            <person name="Strong R."/>
            <person name="Sun E."/>
            <person name="Svirskas R."/>
            <person name="Tector C."/>
            <person name="Turner R."/>
            <person name="Venter E."/>
            <person name="Wang A.H."/>
            <person name="Wang X."/>
            <person name="Wang Z.-Y."/>
            <person name="Wassarman D.A."/>
            <person name="Weinstock G.M."/>
            <person name="Weissenbach J."/>
            <person name="Williams S.M."/>
            <person name="Woodage T."/>
            <person name="Worley K.C."/>
            <person name="Wu D."/>
            <person name="Yang S."/>
            <person name="Yao Q.A."/>
            <person name="Ye J."/>
            <person name="Yeh R.-F."/>
            <person name="Zaveri J.S."/>
            <person name="Zhan M."/>
            <person name="Zhang G."/>
            <person name="Zhao Q."/>
            <person name="Zheng L."/>
            <person name="Zheng X.H."/>
            <person name="Zhong F.N."/>
            <person name="Zhong W."/>
            <person name="Zhou X."/>
            <person name="Zhu S.C."/>
            <person name="Zhu X."/>
            <person name="Smith H.O."/>
            <person name="Gibbs R.A."/>
            <person name="Myers E.W."/>
            <person name="Rubin G.M."/>
            <person name="Venter J.C."/>
        </authorList>
    </citation>
    <scope>NUCLEOTIDE SEQUENCE [LARGE SCALE GENOMIC DNA]</scope>
    <source>
        <strain>Berkeley</strain>
    </source>
</reference>
<reference key="4">
    <citation type="journal article" date="2002" name="Genome Biol.">
        <title>Annotation of the Drosophila melanogaster euchromatic genome: a systematic review.</title>
        <authorList>
            <person name="Misra S."/>
            <person name="Crosby M.A."/>
            <person name="Mungall C.J."/>
            <person name="Matthews B.B."/>
            <person name="Campbell K.S."/>
            <person name="Hradecky P."/>
            <person name="Huang Y."/>
            <person name="Kaminker J.S."/>
            <person name="Millburn G.H."/>
            <person name="Prochnik S.E."/>
            <person name="Smith C.D."/>
            <person name="Tupy J.L."/>
            <person name="Whitfield E.J."/>
            <person name="Bayraktaroglu L."/>
            <person name="Berman B.P."/>
            <person name="Bettencourt B.R."/>
            <person name="Celniker S.E."/>
            <person name="de Grey A.D.N.J."/>
            <person name="Drysdale R.A."/>
            <person name="Harris N.L."/>
            <person name="Richter J."/>
            <person name="Russo S."/>
            <person name="Schroeder A.J."/>
            <person name="Shu S.Q."/>
            <person name="Stapleton M."/>
            <person name="Yamada C."/>
            <person name="Ashburner M."/>
            <person name="Gelbart W.M."/>
            <person name="Rubin G.M."/>
            <person name="Lewis S.E."/>
        </authorList>
    </citation>
    <scope>GENOME REANNOTATION</scope>
    <source>
        <strain>Berkeley</strain>
    </source>
</reference>
<reference key="5">
    <citation type="submission" date="2003-01" db="EMBL/GenBank/DDBJ databases">
        <authorList>
            <person name="Stapleton M."/>
            <person name="Brokstein P."/>
            <person name="Hong L."/>
            <person name="Agbayani A."/>
            <person name="Carlson J.W."/>
            <person name="Champe M."/>
            <person name="Chavez C."/>
            <person name="Dorsett V."/>
            <person name="Dresnek D."/>
            <person name="Farfan D."/>
            <person name="Frise E."/>
            <person name="George R.A."/>
            <person name="Gonzalez M."/>
            <person name="Guarin H."/>
            <person name="Kronmiller B."/>
            <person name="Li P.W."/>
            <person name="Liao G."/>
            <person name="Miranda A."/>
            <person name="Mungall C.J."/>
            <person name="Nunoo J."/>
            <person name="Pacleb J.M."/>
            <person name="Paragas V."/>
            <person name="Park S."/>
            <person name="Patel S."/>
            <person name="Phouanenavong S."/>
            <person name="Wan K.H."/>
            <person name="Yu C."/>
            <person name="Lewis S.E."/>
            <person name="Rubin G.M."/>
            <person name="Celniker S.E."/>
        </authorList>
    </citation>
    <scope>NUCLEOTIDE SEQUENCE [LARGE SCALE MRNA]</scope>
    <source>
        <strain>Berkeley</strain>
        <tissue>Larva</tissue>
        <tissue>Pupae</tissue>
    </source>
</reference>
<dbReference type="EMBL" id="S57693">
    <property type="protein sequence ID" value="AAB19930.1"/>
    <property type="molecule type" value="Genomic_DNA"/>
</dbReference>
<dbReference type="EMBL" id="AF045787">
    <property type="protein sequence ID" value="AAC15687.1"/>
    <property type="molecule type" value="Genomic_DNA"/>
</dbReference>
<dbReference type="EMBL" id="AF045788">
    <property type="protein sequence ID" value="AAC15688.1"/>
    <property type="molecule type" value="Genomic_DNA"/>
</dbReference>
<dbReference type="EMBL" id="AF045789">
    <property type="protein sequence ID" value="AAC15689.1"/>
    <property type="molecule type" value="Genomic_DNA"/>
</dbReference>
<dbReference type="EMBL" id="AF045790">
    <property type="protein sequence ID" value="AAC15690.1"/>
    <property type="molecule type" value="Genomic_DNA"/>
</dbReference>
<dbReference type="EMBL" id="AF045791">
    <property type="protein sequence ID" value="AAC15691.1"/>
    <property type="molecule type" value="Genomic_DNA"/>
</dbReference>
<dbReference type="EMBL" id="AF045792">
    <property type="protein sequence ID" value="AAC15692.1"/>
    <property type="molecule type" value="Genomic_DNA"/>
</dbReference>
<dbReference type="EMBL" id="AF045793">
    <property type="protein sequence ID" value="AAC15693.1"/>
    <property type="molecule type" value="Genomic_DNA"/>
</dbReference>
<dbReference type="EMBL" id="AF045794">
    <property type="protein sequence ID" value="AAC15694.1"/>
    <property type="molecule type" value="Genomic_DNA"/>
</dbReference>
<dbReference type="EMBL" id="AF045795">
    <property type="protein sequence ID" value="AAC15695.1"/>
    <property type="molecule type" value="Genomic_DNA"/>
</dbReference>
<dbReference type="EMBL" id="AF045796">
    <property type="protein sequence ID" value="AAC15696.1"/>
    <property type="molecule type" value="Genomic_DNA"/>
</dbReference>
<dbReference type="EMBL" id="AE014134">
    <property type="protein sequence ID" value="AAF52772.1"/>
    <property type="molecule type" value="Genomic_DNA"/>
</dbReference>
<dbReference type="EMBL" id="AY061549">
    <property type="protein sequence ID" value="AAL29097.1"/>
    <property type="molecule type" value="mRNA"/>
</dbReference>
<dbReference type="RefSeq" id="NP_001285777.1">
    <property type="nucleotide sequence ID" value="NM_001298848.1"/>
</dbReference>
<dbReference type="RefSeq" id="NP_001285778.1">
    <property type="nucleotide sequence ID" value="NM_001298849.1"/>
</dbReference>
<dbReference type="RefSeq" id="NP_523522.1">
    <property type="nucleotide sequence ID" value="NM_078798.4"/>
</dbReference>
<dbReference type="SMR" id="P54398"/>
<dbReference type="BioGRID" id="60363">
    <property type="interactions" value="8"/>
</dbReference>
<dbReference type="IntAct" id="P54398">
    <property type="interactions" value="7"/>
</dbReference>
<dbReference type="STRING" id="7227.FBpp0310073"/>
<dbReference type="PaxDb" id="7227-FBpp0079408"/>
<dbReference type="DNASU" id="34259"/>
<dbReference type="GeneID" id="34259"/>
<dbReference type="KEGG" id="dme:Dmel_CG3763"/>
<dbReference type="AGR" id="FB:FBgn0000640"/>
<dbReference type="CTD" id="8789"/>
<dbReference type="FlyBase" id="FBgn0000640">
    <property type="gene designation" value="Fbp2"/>
</dbReference>
<dbReference type="VEuPathDB" id="VectorBase:FBgn0000640"/>
<dbReference type="eggNOG" id="KOG4169">
    <property type="taxonomic scope" value="Eukaryota"/>
</dbReference>
<dbReference type="HOGENOM" id="CLU_010194_2_16_1"/>
<dbReference type="InParanoid" id="P54398"/>
<dbReference type="OrthoDB" id="417891at2759"/>
<dbReference type="PhylomeDB" id="P54398"/>
<dbReference type="Reactome" id="R-DME-2142700">
    <property type="pathway name" value="Biosynthesis of Lipoxins (LX)"/>
</dbReference>
<dbReference type="Reactome" id="R-DME-9018676">
    <property type="pathway name" value="Biosynthesis of D-series resolvins"/>
</dbReference>
<dbReference type="Reactome" id="R-DME-9018896">
    <property type="pathway name" value="Biosynthesis of E-series 18(S)-resolvins"/>
</dbReference>
<dbReference type="BioGRID-ORCS" id="34259">
    <property type="hits" value="0 hits in 1 CRISPR screen"/>
</dbReference>
<dbReference type="ChiTaRS" id="Fbp2">
    <property type="organism name" value="fly"/>
</dbReference>
<dbReference type="GenomeRNAi" id="34259"/>
<dbReference type="PRO" id="PR:P54398"/>
<dbReference type="Proteomes" id="UP000000803">
    <property type="component" value="Chromosome 2L"/>
</dbReference>
<dbReference type="ExpressionAtlas" id="P54398">
    <property type="expression patterns" value="baseline and differential"/>
</dbReference>
<dbReference type="GO" id="GO:0005737">
    <property type="term" value="C:cytoplasm"/>
    <property type="evidence" value="ECO:0000318"/>
    <property type="project" value="GO_Central"/>
</dbReference>
<dbReference type="GO" id="GO:0005615">
    <property type="term" value="C:extracellular space"/>
    <property type="evidence" value="ECO:0000314"/>
    <property type="project" value="FlyBase"/>
</dbReference>
<dbReference type="GO" id="GO:0004022">
    <property type="term" value="F:alcohol dehydrogenase (NAD+) activity"/>
    <property type="evidence" value="ECO:0007669"/>
    <property type="project" value="InterPro"/>
</dbReference>
<dbReference type="GO" id="GO:0045735">
    <property type="term" value="F:nutrient reservoir activity"/>
    <property type="evidence" value="ECO:0000315"/>
    <property type="project" value="FlyBase"/>
</dbReference>
<dbReference type="GO" id="GO:0016616">
    <property type="term" value="F:oxidoreductase activity, acting on the CH-OH group of donors, NAD or NADP as acceptor"/>
    <property type="evidence" value="ECO:0000318"/>
    <property type="project" value="GO_Central"/>
</dbReference>
<dbReference type="GO" id="GO:0097009">
    <property type="term" value="P:energy homeostasis"/>
    <property type="evidence" value="ECO:0000315"/>
    <property type="project" value="FlyBase"/>
</dbReference>
<dbReference type="CDD" id="cd05323">
    <property type="entry name" value="ADH_SDR_c_like"/>
    <property type="match status" value="1"/>
</dbReference>
<dbReference type="FunFam" id="3.40.50.720:FF:000149">
    <property type="entry name" value="15-hydroxyprostaglandin dehydrogenase [NAD(+)]"/>
    <property type="match status" value="1"/>
</dbReference>
<dbReference type="Gene3D" id="3.40.50.720">
    <property type="entry name" value="NAD(P)-binding Rossmann-like Domain"/>
    <property type="match status" value="1"/>
</dbReference>
<dbReference type="InterPro" id="IPR002426">
    <property type="entry name" value="ADH_Ceratitis-type"/>
</dbReference>
<dbReference type="InterPro" id="IPR036291">
    <property type="entry name" value="NAD(P)-bd_dom_sf"/>
</dbReference>
<dbReference type="InterPro" id="IPR002347">
    <property type="entry name" value="SDR_fam"/>
</dbReference>
<dbReference type="PANTHER" id="PTHR44229">
    <property type="entry name" value="15-HYDROXYPROSTAGLANDIN DEHYDROGENASE [NAD(+)]"/>
    <property type="match status" value="1"/>
</dbReference>
<dbReference type="PANTHER" id="PTHR44229:SF8">
    <property type="entry name" value="ALCOHOL DEHYDROGENASE-RELATED"/>
    <property type="match status" value="1"/>
</dbReference>
<dbReference type="Pfam" id="PF00106">
    <property type="entry name" value="adh_short"/>
    <property type="match status" value="1"/>
</dbReference>
<dbReference type="PRINTS" id="PR01169">
    <property type="entry name" value="CERATITISADH"/>
</dbReference>
<dbReference type="PRINTS" id="PR01167">
    <property type="entry name" value="INSADHFAMILY"/>
</dbReference>
<dbReference type="PRINTS" id="PR00080">
    <property type="entry name" value="SDRFAMILY"/>
</dbReference>
<dbReference type="SUPFAM" id="SSF51735">
    <property type="entry name" value="NAD(P)-binding Rossmann-fold domains"/>
    <property type="match status" value="1"/>
</dbReference>
<sequence>MFDWTGKNVVYVGSFSGIGWQMMMQLMQKDIKMMGIMHRMENVEMMKKLQAINPSVKVVFMQMNLMEKMSIEQAMKKMGQMMGHIDVMINGEGVLLDKDVETTMGMNLTGMIQSTMMAMPYMDKTQMGMGGMVVNMSSVYGLEPAPAFAVYAAAMHGILGFTRSMGDKMIYQKTGVMFMAMCPGLTNSEMIMNLRDNVTWHHSESMVEAIESAKRQMPEEAAMQMIHAMEMMKNGSMWIVSMGQLKEVTPTMHWQM</sequence>
<feature type="chain" id="PRO_0000054696" description="Fat body protein 2">
    <location>
        <begin position="1"/>
        <end position="256"/>
    </location>
</feature>
<feature type="active site" description="Proton acceptor" evidence="1">
    <location>
        <position position="151"/>
    </location>
</feature>
<feature type="binding site" evidence="1">
    <location>
        <begin position="10"/>
        <end position="34"/>
    </location>
    <ligand>
        <name>NAD(+)</name>
        <dbReference type="ChEBI" id="CHEBI:57540"/>
    </ligand>
</feature>
<feature type="binding site" evidence="1">
    <location>
        <position position="138"/>
    </location>
    <ligand>
        <name>substrate</name>
    </ligand>
</feature>
<feature type="sequence variant" description="In strain: Berkeley and L28.">
    <original>E</original>
    <variation>K</variation>
    <location>
        <position position="44"/>
    </location>
</feature>
<feature type="sequence variant" description="In strain: L21 and L126.">
    <original>E</original>
    <variation>D</variation>
    <location>
        <position position="72"/>
    </location>
</feature>
<feature type="sequence variant" description="In strain: Berkeley and L28.">
    <original>A</original>
    <variation>S</variation>
    <location>
        <position position="149"/>
    </location>
</feature>
<feature type="sequence variant" description="In strain: L12.">
    <original>Y</original>
    <variation>H</variation>
    <location>
        <position position="171"/>
    </location>
</feature>
<feature type="sequence variant" description="In strain: L126.">
    <original>R</original>
    <variation>S</variation>
    <location>
        <position position="215"/>
    </location>
</feature>
<feature type="sequence conflict" description="In Ref. 1 and 2." evidence="2" ref="1 2">
    <original>I</original>
    <variation>M</variation>
    <location>
        <position position="191"/>
    </location>
</feature>
<feature type="sequence conflict" description="In Ref. 1 and 2." evidence="2" ref="1 2">
    <original>S</original>
    <variation>N</variation>
    <location>
        <position position="241"/>
    </location>
</feature>